<sequence>MPADHIPALALAGPTASGKTAAAFAIADALAPRLPVEIISVDSALVYSGMDIGTAKPTPAEQARVPHHLIDIRDPLQAYSAAEFVQDATRLIGEIRARGALPLLVGGTMLYFKALFDGIDDMPPADAAVRARLEAQAAAIGWSGMHAELARVDPPTAARLAPGDSQRIQRALEVWHVSGRPLSSFHTTKTVAASARPMSAASLFSLEPHDRAWLHGRIAERFHAMLAAGFLDEVLRLRARGDLHADLPSMRCVGYRQAWESLDGLYPMSSLPERGIAATRQLAKRQITWLRSMPERHSIACDAPDATAQLVQAVRARVWGGGA</sequence>
<gene>
    <name evidence="1" type="primary">miaA</name>
    <name type="ordered locus">Dtpsy_2457</name>
</gene>
<keyword id="KW-0067">ATP-binding</keyword>
<keyword id="KW-0460">Magnesium</keyword>
<keyword id="KW-0547">Nucleotide-binding</keyword>
<keyword id="KW-1185">Reference proteome</keyword>
<keyword id="KW-0808">Transferase</keyword>
<keyword id="KW-0819">tRNA processing</keyword>
<comment type="function">
    <text evidence="1">Catalyzes the transfer of a dimethylallyl group onto the adenine at position 37 in tRNAs that read codons beginning with uridine, leading to the formation of N6-(dimethylallyl)adenosine (i(6)A).</text>
</comment>
<comment type="catalytic activity">
    <reaction evidence="1">
        <text>adenosine(37) in tRNA + dimethylallyl diphosphate = N(6)-dimethylallyladenosine(37) in tRNA + diphosphate</text>
        <dbReference type="Rhea" id="RHEA:26482"/>
        <dbReference type="Rhea" id="RHEA-COMP:10162"/>
        <dbReference type="Rhea" id="RHEA-COMP:10375"/>
        <dbReference type="ChEBI" id="CHEBI:33019"/>
        <dbReference type="ChEBI" id="CHEBI:57623"/>
        <dbReference type="ChEBI" id="CHEBI:74411"/>
        <dbReference type="ChEBI" id="CHEBI:74415"/>
        <dbReference type="EC" id="2.5.1.75"/>
    </reaction>
</comment>
<comment type="cofactor">
    <cofactor evidence="1">
        <name>Mg(2+)</name>
        <dbReference type="ChEBI" id="CHEBI:18420"/>
    </cofactor>
</comment>
<comment type="subunit">
    <text evidence="1">Monomer.</text>
</comment>
<comment type="similarity">
    <text evidence="1">Belongs to the IPP transferase family.</text>
</comment>
<name>MIAA_ACIET</name>
<evidence type="ECO:0000255" key="1">
    <source>
        <dbReference type="HAMAP-Rule" id="MF_00185"/>
    </source>
</evidence>
<proteinExistence type="inferred from homology"/>
<organism>
    <name type="scientific">Acidovorax ebreus (strain TPSY)</name>
    <name type="common">Diaphorobacter sp. (strain TPSY)</name>
    <dbReference type="NCBI Taxonomy" id="535289"/>
    <lineage>
        <taxon>Bacteria</taxon>
        <taxon>Pseudomonadati</taxon>
        <taxon>Pseudomonadota</taxon>
        <taxon>Betaproteobacteria</taxon>
        <taxon>Burkholderiales</taxon>
        <taxon>Comamonadaceae</taxon>
        <taxon>Diaphorobacter</taxon>
    </lineage>
</organism>
<protein>
    <recommendedName>
        <fullName evidence="1">tRNA dimethylallyltransferase</fullName>
        <ecNumber evidence="1">2.5.1.75</ecNumber>
    </recommendedName>
    <alternativeName>
        <fullName evidence="1">Dimethylallyl diphosphate:tRNA dimethylallyltransferase</fullName>
        <shortName evidence="1">DMAPP:tRNA dimethylallyltransferase</shortName>
        <shortName evidence="1">DMATase</shortName>
    </alternativeName>
    <alternativeName>
        <fullName evidence="1">Isopentenyl-diphosphate:tRNA isopentenyltransferase</fullName>
        <shortName evidence="1">IPP transferase</shortName>
        <shortName evidence="1">IPPT</shortName>
        <shortName evidence="1">IPTase</shortName>
    </alternativeName>
</protein>
<reference key="1">
    <citation type="submission" date="2009-01" db="EMBL/GenBank/DDBJ databases">
        <title>Complete sequence of Diaphorobacter sp. TPSY.</title>
        <authorList>
            <consortium name="US DOE Joint Genome Institute"/>
            <person name="Lucas S."/>
            <person name="Copeland A."/>
            <person name="Lapidus A."/>
            <person name="Glavina del Rio T."/>
            <person name="Tice H."/>
            <person name="Bruce D."/>
            <person name="Goodwin L."/>
            <person name="Pitluck S."/>
            <person name="Chertkov O."/>
            <person name="Brettin T."/>
            <person name="Detter J.C."/>
            <person name="Han C."/>
            <person name="Larimer F."/>
            <person name="Land M."/>
            <person name="Hauser L."/>
            <person name="Kyrpides N."/>
            <person name="Mikhailova N."/>
            <person name="Coates J.D."/>
        </authorList>
    </citation>
    <scope>NUCLEOTIDE SEQUENCE [LARGE SCALE GENOMIC DNA]</scope>
    <source>
        <strain>TPSY</strain>
    </source>
</reference>
<accession>B9MCW1</accession>
<dbReference type="EC" id="2.5.1.75" evidence="1"/>
<dbReference type="EMBL" id="CP001392">
    <property type="protein sequence ID" value="ACM33893.1"/>
    <property type="molecule type" value="Genomic_DNA"/>
</dbReference>
<dbReference type="RefSeq" id="WP_015913838.1">
    <property type="nucleotide sequence ID" value="NC_011992.1"/>
</dbReference>
<dbReference type="SMR" id="B9MCW1"/>
<dbReference type="KEGG" id="dia:Dtpsy_2457"/>
<dbReference type="eggNOG" id="COG0324">
    <property type="taxonomic scope" value="Bacteria"/>
</dbReference>
<dbReference type="HOGENOM" id="CLU_032616_0_0_4"/>
<dbReference type="Proteomes" id="UP000000450">
    <property type="component" value="Chromosome"/>
</dbReference>
<dbReference type="GO" id="GO:0005524">
    <property type="term" value="F:ATP binding"/>
    <property type="evidence" value="ECO:0007669"/>
    <property type="project" value="UniProtKB-UniRule"/>
</dbReference>
<dbReference type="GO" id="GO:0052381">
    <property type="term" value="F:tRNA dimethylallyltransferase activity"/>
    <property type="evidence" value="ECO:0007669"/>
    <property type="project" value="UniProtKB-UniRule"/>
</dbReference>
<dbReference type="GO" id="GO:0006400">
    <property type="term" value="P:tRNA modification"/>
    <property type="evidence" value="ECO:0007669"/>
    <property type="project" value="TreeGrafter"/>
</dbReference>
<dbReference type="FunFam" id="1.10.20.140:FF:000001">
    <property type="entry name" value="tRNA dimethylallyltransferase"/>
    <property type="match status" value="1"/>
</dbReference>
<dbReference type="Gene3D" id="1.10.20.140">
    <property type="match status" value="1"/>
</dbReference>
<dbReference type="Gene3D" id="3.40.50.300">
    <property type="entry name" value="P-loop containing nucleotide triphosphate hydrolases"/>
    <property type="match status" value="1"/>
</dbReference>
<dbReference type="HAMAP" id="MF_00185">
    <property type="entry name" value="IPP_trans"/>
    <property type="match status" value="1"/>
</dbReference>
<dbReference type="InterPro" id="IPR039657">
    <property type="entry name" value="Dimethylallyltransferase"/>
</dbReference>
<dbReference type="InterPro" id="IPR018022">
    <property type="entry name" value="IPT"/>
</dbReference>
<dbReference type="InterPro" id="IPR027417">
    <property type="entry name" value="P-loop_NTPase"/>
</dbReference>
<dbReference type="NCBIfam" id="TIGR00174">
    <property type="entry name" value="miaA"/>
    <property type="match status" value="1"/>
</dbReference>
<dbReference type="PANTHER" id="PTHR11088">
    <property type="entry name" value="TRNA DIMETHYLALLYLTRANSFERASE"/>
    <property type="match status" value="1"/>
</dbReference>
<dbReference type="PANTHER" id="PTHR11088:SF60">
    <property type="entry name" value="TRNA DIMETHYLALLYLTRANSFERASE"/>
    <property type="match status" value="1"/>
</dbReference>
<dbReference type="Pfam" id="PF01715">
    <property type="entry name" value="IPPT"/>
    <property type="match status" value="1"/>
</dbReference>
<dbReference type="SUPFAM" id="SSF52540">
    <property type="entry name" value="P-loop containing nucleoside triphosphate hydrolases"/>
    <property type="match status" value="1"/>
</dbReference>
<feature type="chain" id="PRO_0000377149" description="tRNA dimethylallyltransferase">
    <location>
        <begin position="1"/>
        <end position="323"/>
    </location>
</feature>
<feature type="region of interest" description="Interaction with substrate tRNA" evidence="1">
    <location>
        <begin position="42"/>
        <end position="45"/>
    </location>
</feature>
<feature type="region of interest" description="Interaction with substrate tRNA" evidence="1">
    <location>
        <begin position="166"/>
        <end position="170"/>
    </location>
</feature>
<feature type="region of interest" description="Interaction with substrate tRNA" evidence="1">
    <location>
        <begin position="251"/>
        <end position="256"/>
    </location>
</feature>
<feature type="region of interest" description="Interaction with substrate tRNA" evidence="1">
    <location>
        <begin position="284"/>
        <end position="291"/>
    </location>
</feature>
<feature type="binding site" evidence="1">
    <location>
        <begin position="13"/>
        <end position="20"/>
    </location>
    <ligand>
        <name>ATP</name>
        <dbReference type="ChEBI" id="CHEBI:30616"/>
    </ligand>
</feature>
<feature type="binding site" evidence="1">
    <location>
        <begin position="15"/>
        <end position="20"/>
    </location>
    <ligand>
        <name>substrate</name>
    </ligand>
</feature>
<feature type="site" description="Interaction with substrate tRNA" evidence="1">
    <location>
        <position position="108"/>
    </location>
</feature>
<feature type="site" description="Interaction with substrate tRNA" evidence="1">
    <location>
        <position position="130"/>
    </location>
</feature>